<comment type="function">
    <text evidence="2 4">DNA-binding protein involved in single-strand DNA break repair, double-strand DNA break repair and base excision repair. Resolves abortive DNA ligation intermediates formed either at base excision sites, or when DNA ligases attempt to repair non-ligatable breaks induced by reactive oxygen species. Catalyzes the release of adenylate groups covalently linked to 5'-phosphate termini, resulting in the production of 5'-phosphate termini that can be efficiently rejoined. Also able to hydrolyze adenosine 5'-monophosphoramidate (AMP-NH(2)) and diadenosine tetraphosphate (AppppA), but with lower catalytic activity (By similarity). Likewise, catalyzes the release of 3'-linked guanosine (DNAppG) and inosine (DNAppI) from DNA, but has higher specific activity with 5'-linked adenosine (AppDNA) (By similarity).</text>
</comment>
<comment type="catalytic activity">
    <reaction evidence="4">
        <text>a 5'-end adenosine-5'-diphospho-5'-2'-deoxyribonucleoside-DNA + H2O = a 5'-end 5'-phospho-2'-deoxyribonucleoside-DNA + AMP + 2 H(+)</text>
        <dbReference type="Rhea" id="RHEA:52128"/>
        <dbReference type="Rhea" id="RHEA-COMP:13180"/>
        <dbReference type="Rhea" id="RHEA-COMP:13181"/>
        <dbReference type="ChEBI" id="CHEBI:15377"/>
        <dbReference type="ChEBI" id="CHEBI:15378"/>
        <dbReference type="ChEBI" id="CHEBI:136412"/>
        <dbReference type="ChEBI" id="CHEBI:136413"/>
        <dbReference type="ChEBI" id="CHEBI:456215"/>
        <dbReference type="EC" id="3.6.1.71"/>
    </reaction>
</comment>
<comment type="catalytic activity">
    <reaction evidence="4">
        <text>a 5'-end adenosine-5'-diphospho-5'-ribonucleoside-2'-deoxyribonucleotide-DNA + H2O = a 5'-end 5'-phospho-ribonucleoside-2'-deoxyribonucleotide-DNA + AMP + 2 H(+)</text>
        <dbReference type="Rhea" id="RHEA:52132"/>
        <dbReference type="Rhea" id="RHEA-COMP:13182"/>
        <dbReference type="Rhea" id="RHEA-COMP:13183"/>
        <dbReference type="ChEBI" id="CHEBI:15377"/>
        <dbReference type="ChEBI" id="CHEBI:15378"/>
        <dbReference type="ChEBI" id="CHEBI:136414"/>
        <dbReference type="ChEBI" id="CHEBI:136415"/>
        <dbReference type="ChEBI" id="CHEBI:456215"/>
        <dbReference type="EC" id="3.6.1.71"/>
    </reaction>
</comment>
<comment type="catalytic activity">
    <reaction evidence="2">
        <text>a 3'-end 2'-deoxyribonucleotide-3'-diphospho-5'-guanosine-DNA + H2O = a 3'-end 2'-deoxyribonucleotide 3'-phosphate-DNA + GMP + 2 H(+)</text>
        <dbReference type="Rhea" id="RHEA:52140"/>
        <dbReference type="Rhea" id="RHEA-COMP:13186"/>
        <dbReference type="Rhea" id="RHEA-COMP:13187"/>
        <dbReference type="ChEBI" id="CHEBI:15377"/>
        <dbReference type="ChEBI" id="CHEBI:15378"/>
        <dbReference type="ChEBI" id="CHEBI:58115"/>
        <dbReference type="ChEBI" id="CHEBI:136419"/>
        <dbReference type="ChEBI" id="CHEBI:136420"/>
        <dbReference type="EC" id="3.6.1.72"/>
    </reaction>
</comment>
<comment type="subunit">
    <text evidence="4">Interacts with single-strand break repair proteins XRCC1, XRCC4, ADPRT/PARP1 and p53/TP53. Interacts with NCL. Interacts (via FHA-like domain) with MDC1 (phosphorylated).</text>
</comment>
<comment type="subcellular location">
    <subcellularLocation>
        <location evidence="4">Nucleus</location>
        <location evidence="4">Nucleoplasm</location>
    </subcellularLocation>
    <subcellularLocation>
        <location evidence="4">Nucleus</location>
        <location evidence="4">Nucleolus</location>
    </subcellularLocation>
    <text evidence="4">Upon genotoxic stress, colocalizes with XRCC1 at sites of DNA damage. Colocalizes with MDC1 at sites of DNA double-strand breaks. Interaction with NCL is required for nucleolar localization (By similarity).</text>
</comment>
<comment type="alternative products">
    <event type="alternative splicing"/>
    <isoform>
        <id>Q9BGQ0-1</id>
        <name>1</name>
        <sequence type="displayed"/>
    </isoform>
    <isoform>
        <id>Q9BGQ0-2</id>
        <name>2</name>
        <sequence type="described" ref="VSP_013358"/>
    </isoform>
</comment>
<comment type="domain">
    <text evidence="4">The histidine triad, also called HIT motif, forms part of the binding loop for the alpha-phosphate of purine mononucleotide.</text>
</comment>
<comment type="domain">
    <text evidence="1">The FHA-like domain mediates interaction with NCL; XRCC1 and XRCC4.</text>
</comment>
<comment type="domain">
    <text evidence="1">The HIT domain is required for enzymatic activity.</text>
</comment>
<comment type="domain">
    <text evidence="1">The C2H2-type zinc finger mediates DNA-binding.</text>
</comment>
<sequence length="356" mass="40847">MSNVNLSVSDVWRLMMRVCWLVRQDSRHQRIRLPHLEAVVIGRGPETKITDKKCSRQQVQLKAECNKGYVKVKQVGVNPTSIDSVVIGKDQEVKLQPGQVLHMVNELYPYIVEFEEEAKNPGLETHRKRKRSGDSDSIERDAAHEAEPGTGLEPGSNHNQCSVPPKKGKDAPIKKESLGHWSQGLKISMQDPKMQVYKDEQVVVIKDKYPKARYHWLVLPWTAISSLKAVTREHLELLKHMHTVGEKVIVDFAGSSKLRFRLGYHAIPSMSHVHLHVISQDFDSPCLKNKKHWNSFNTEYFLESQAVIEMVQEAGRVTVRDGMPELLKLPLRCHECQQLLPSIPQLKEHLRKHWTQ</sequence>
<feature type="chain" id="PRO_0000109839" description="Aprataxin">
    <location>
        <begin position="1"/>
        <end position="356"/>
    </location>
</feature>
<feature type="domain" description="FHA-like">
    <location>
        <begin position="38"/>
        <end position="87"/>
    </location>
</feature>
<feature type="domain" description="HIT" evidence="5">
    <location>
        <begin position="182"/>
        <end position="287"/>
    </location>
</feature>
<feature type="zinc finger region" description="C2H2-type">
    <location>
        <begin position="331"/>
        <end position="353"/>
    </location>
</feature>
<feature type="region of interest" description="Interactions with ADPRT/PARP1 and NCL" evidence="1">
    <location>
        <begin position="1"/>
        <end position="110"/>
    </location>
</feature>
<feature type="region of interest" description="Disordered" evidence="6">
    <location>
        <begin position="122"/>
        <end position="173"/>
    </location>
</feature>
<feature type="region of interest" description="Interaction with DNA substrate" evidence="4">
    <location>
        <begin position="207"/>
        <end position="211"/>
    </location>
</feature>
<feature type="region of interest" description="Interaction with DNA substrate" evidence="4">
    <location>
        <begin position="269"/>
        <end position="270"/>
    </location>
</feature>
<feature type="short sequence motif" description="Nuclear localization signal" evidence="1">
    <location>
        <begin position="126"/>
        <end position="131"/>
    </location>
</feature>
<feature type="short sequence motif" description="Histidine triad motif" evidence="5">
    <location>
        <begin position="272"/>
        <end position="276"/>
    </location>
</feature>
<feature type="compositionally biased region" description="Basic and acidic residues" evidence="6">
    <location>
        <begin position="132"/>
        <end position="147"/>
    </location>
</feature>
<feature type="active site" description="Tele-AMP-histidine intermediate" evidence="4">
    <location>
        <position position="274"/>
    </location>
</feature>
<feature type="site" description="Interaction with DNA substrate" evidence="4">
    <location>
        <position position="188"/>
    </location>
</feature>
<feature type="site" description="Interaction with DNA substrate" evidence="4">
    <location>
        <position position="265"/>
    </location>
</feature>
<feature type="site" description="Interaction with DNA substrate" evidence="4">
    <location>
        <position position="276"/>
    </location>
</feature>
<feature type="site" description="Interaction with DNA substrate" evidence="4">
    <location>
        <position position="291"/>
    </location>
</feature>
<feature type="modified residue" description="Phosphoserine" evidence="4">
    <location>
        <position position="132"/>
    </location>
</feature>
<feature type="modified residue" description="Phosphoserine" evidence="3">
    <location>
        <position position="137"/>
    </location>
</feature>
<feature type="splice variant" id="VSP_013358" description="In isoform 2." evidence="7">
    <location>
        <begin position="1"/>
        <end position="188"/>
    </location>
</feature>
<name>APTX_MACFA</name>
<reference key="1">
    <citation type="submission" date="2001-02" db="EMBL/GenBank/DDBJ databases">
        <title>Isolation of full-length cDNA clones from macaque brain cDNA libraries.</title>
        <authorList>
            <person name="Osada N."/>
            <person name="Hida M."/>
            <person name="Kusuda J."/>
            <person name="Tanuma R."/>
            <person name="Iseki K."/>
            <person name="Hirai M."/>
            <person name="Terao K."/>
            <person name="Suzuki Y."/>
            <person name="Sugano S."/>
            <person name="Hashimoto K."/>
        </authorList>
    </citation>
    <scope>NUCLEOTIDE SEQUENCE [LARGE SCALE MRNA] (ISOFORM 1)</scope>
    <source>
        <tissue>Frontal cortex</tissue>
    </source>
</reference>
<reference key="2">
    <citation type="submission" date="2003-10" db="EMBL/GenBank/DDBJ databases">
        <title>Isolation and characterization of cDNA for macaque neurological disease genes.</title>
        <authorList>
            <person name="Kusuda J."/>
            <person name="Osada N."/>
            <person name="Tanuma R."/>
            <person name="Hirata M."/>
            <person name="Sugano S."/>
            <person name="Hashimoto K."/>
        </authorList>
    </citation>
    <scope>NUCLEOTIDE SEQUENCE [LARGE SCALE MRNA] (ISOFORM 2)</scope>
    <source>
        <tissue>Frontal cortex</tissue>
    </source>
</reference>
<organism>
    <name type="scientific">Macaca fascicularis</name>
    <name type="common">Crab-eating macaque</name>
    <name type="synonym">Cynomolgus monkey</name>
    <dbReference type="NCBI Taxonomy" id="9541"/>
    <lineage>
        <taxon>Eukaryota</taxon>
        <taxon>Metazoa</taxon>
        <taxon>Chordata</taxon>
        <taxon>Craniata</taxon>
        <taxon>Vertebrata</taxon>
        <taxon>Euteleostomi</taxon>
        <taxon>Mammalia</taxon>
        <taxon>Eutheria</taxon>
        <taxon>Euarchontoglires</taxon>
        <taxon>Primates</taxon>
        <taxon>Haplorrhini</taxon>
        <taxon>Catarrhini</taxon>
        <taxon>Cercopithecidae</taxon>
        <taxon>Cercopithecinae</taxon>
        <taxon>Macaca</taxon>
    </lineage>
</organism>
<dbReference type="EC" id="3.6.1.71" evidence="4"/>
<dbReference type="EC" id="3.6.1.72" evidence="2"/>
<dbReference type="EMBL" id="AB056422">
    <property type="protein sequence ID" value="BAB33080.1"/>
    <property type="molecule type" value="mRNA"/>
</dbReference>
<dbReference type="EMBL" id="AB125151">
    <property type="protein sequence ID" value="BAD51939.1"/>
    <property type="molecule type" value="mRNA"/>
</dbReference>
<dbReference type="SMR" id="Q9BGQ0"/>
<dbReference type="STRING" id="9541.ENSMFAP00000023010"/>
<dbReference type="eggNOG" id="KOG0562">
    <property type="taxonomic scope" value="Eukaryota"/>
</dbReference>
<dbReference type="eggNOG" id="KOG2134">
    <property type="taxonomic scope" value="Eukaryota"/>
</dbReference>
<dbReference type="Proteomes" id="UP000233100">
    <property type="component" value="Unplaced"/>
</dbReference>
<dbReference type="GO" id="GO:0005730">
    <property type="term" value="C:nucleolus"/>
    <property type="evidence" value="ECO:0007669"/>
    <property type="project" value="UniProtKB-SubCell"/>
</dbReference>
<dbReference type="GO" id="GO:0005654">
    <property type="term" value="C:nucleoplasm"/>
    <property type="evidence" value="ECO:0007669"/>
    <property type="project" value="UniProtKB-SubCell"/>
</dbReference>
<dbReference type="GO" id="GO:0033699">
    <property type="term" value="F:DNA 5'-adenosine monophosphate hydrolase activity"/>
    <property type="evidence" value="ECO:0007669"/>
    <property type="project" value="UniProtKB-EC"/>
</dbReference>
<dbReference type="GO" id="GO:0120108">
    <property type="term" value="F:DNA-3'-diphospho-5'-guanosine diphosphatase"/>
    <property type="evidence" value="ECO:0007669"/>
    <property type="project" value="UniProtKB-EC"/>
</dbReference>
<dbReference type="GO" id="GO:0003725">
    <property type="term" value="F:double-stranded RNA binding"/>
    <property type="evidence" value="ECO:0007669"/>
    <property type="project" value="TreeGrafter"/>
</dbReference>
<dbReference type="GO" id="GO:0030983">
    <property type="term" value="F:mismatched DNA binding"/>
    <property type="evidence" value="ECO:0007669"/>
    <property type="project" value="TreeGrafter"/>
</dbReference>
<dbReference type="GO" id="GO:1990165">
    <property type="term" value="F:single-strand break-containing DNA binding"/>
    <property type="evidence" value="ECO:0007669"/>
    <property type="project" value="TreeGrafter"/>
</dbReference>
<dbReference type="GO" id="GO:0003697">
    <property type="term" value="F:single-stranded DNA binding"/>
    <property type="evidence" value="ECO:0007669"/>
    <property type="project" value="TreeGrafter"/>
</dbReference>
<dbReference type="GO" id="GO:0008270">
    <property type="term" value="F:zinc ion binding"/>
    <property type="evidence" value="ECO:0007669"/>
    <property type="project" value="UniProtKB-KW"/>
</dbReference>
<dbReference type="GO" id="GO:0000012">
    <property type="term" value="P:single strand break repair"/>
    <property type="evidence" value="ECO:0007669"/>
    <property type="project" value="TreeGrafter"/>
</dbReference>
<dbReference type="CDD" id="cd01278">
    <property type="entry name" value="aprataxin_related"/>
    <property type="match status" value="1"/>
</dbReference>
<dbReference type="CDD" id="cd22735">
    <property type="entry name" value="FHA_APTX"/>
    <property type="match status" value="1"/>
</dbReference>
<dbReference type="FunFam" id="2.60.200.20:FF:000010">
    <property type="entry name" value="aprataxin isoform X1"/>
    <property type="match status" value="1"/>
</dbReference>
<dbReference type="FunFam" id="3.30.428.10:FF:000004">
    <property type="entry name" value="aprataxin isoform X2"/>
    <property type="match status" value="1"/>
</dbReference>
<dbReference type="Gene3D" id="2.60.200.20">
    <property type="match status" value="1"/>
</dbReference>
<dbReference type="Gene3D" id="3.30.428.10">
    <property type="entry name" value="HIT-like"/>
    <property type="match status" value="1"/>
</dbReference>
<dbReference type="InterPro" id="IPR041388">
    <property type="entry name" value="FHA_2"/>
</dbReference>
<dbReference type="InterPro" id="IPR047289">
    <property type="entry name" value="FHA_APTX"/>
</dbReference>
<dbReference type="InterPro" id="IPR019808">
    <property type="entry name" value="Histidine_triad_CS"/>
</dbReference>
<dbReference type="InterPro" id="IPR011146">
    <property type="entry name" value="HIT-like"/>
</dbReference>
<dbReference type="InterPro" id="IPR036265">
    <property type="entry name" value="HIT-like_sf"/>
</dbReference>
<dbReference type="InterPro" id="IPR008984">
    <property type="entry name" value="SMAD_FHA_dom_sf"/>
</dbReference>
<dbReference type="InterPro" id="IPR032566">
    <property type="entry name" value="Znf-C2HE"/>
</dbReference>
<dbReference type="InterPro" id="IPR013087">
    <property type="entry name" value="Znf_C2H2_type"/>
</dbReference>
<dbReference type="PANTHER" id="PTHR12486:SF4">
    <property type="entry name" value="APRATAXIN"/>
    <property type="match status" value="1"/>
</dbReference>
<dbReference type="PANTHER" id="PTHR12486">
    <property type="entry name" value="APRATAXIN-RELATED"/>
    <property type="match status" value="1"/>
</dbReference>
<dbReference type="Pfam" id="PF11969">
    <property type="entry name" value="DcpS_C"/>
    <property type="match status" value="1"/>
</dbReference>
<dbReference type="Pfam" id="PF17913">
    <property type="entry name" value="FHA_2"/>
    <property type="match status" value="1"/>
</dbReference>
<dbReference type="Pfam" id="PF16278">
    <property type="entry name" value="zf-C2HE"/>
    <property type="match status" value="1"/>
</dbReference>
<dbReference type="SUPFAM" id="SSF54197">
    <property type="entry name" value="HIT-like"/>
    <property type="match status" value="1"/>
</dbReference>
<dbReference type="SUPFAM" id="SSF49879">
    <property type="entry name" value="SMAD/FHA domain"/>
    <property type="match status" value="1"/>
</dbReference>
<dbReference type="PROSITE" id="PS00892">
    <property type="entry name" value="HIT_1"/>
    <property type="match status" value="1"/>
</dbReference>
<dbReference type="PROSITE" id="PS51084">
    <property type="entry name" value="HIT_2"/>
    <property type="match status" value="1"/>
</dbReference>
<dbReference type="PROSITE" id="PS00028">
    <property type="entry name" value="ZINC_FINGER_C2H2_1"/>
    <property type="match status" value="1"/>
</dbReference>
<proteinExistence type="evidence at transcript level"/>
<keyword id="KW-0025">Alternative splicing</keyword>
<keyword id="KW-0227">DNA damage</keyword>
<keyword id="KW-0234">DNA repair</keyword>
<keyword id="KW-0238">DNA-binding</keyword>
<keyword id="KW-0378">Hydrolase</keyword>
<keyword id="KW-0479">Metal-binding</keyword>
<keyword id="KW-0539">Nucleus</keyword>
<keyword id="KW-0597">Phosphoprotein</keyword>
<keyword id="KW-1185">Reference proteome</keyword>
<keyword id="KW-0862">Zinc</keyword>
<keyword id="KW-0863">Zinc-finger</keyword>
<accession>Q9BGQ0</accession>
<accession>Q60HH6</accession>
<gene>
    <name type="primary">APTX</name>
    <name type="ORF">QflA-13527</name>
    <name type="ORF">QflA-14784</name>
</gene>
<protein>
    <recommendedName>
        <fullName>Aprataxin</fullName>
        <ecNumber evidence="4">3.6.1.71</ecNumber>
        <ecNumber evidence="2">3.6.1.72</ecNumber>
    </recommendedName>
    <alternativeName>
        <fullName>Forkhead-associated domain histidine triad-like protein</fullName>
        <shortName>FHA-HIT</shortName>
    </alternativeName>
</protein>
<evidence type="ECO:0000250" key="1"/>
<evidence type="ECO:0000250" key="2">
    <source>
        <dbReference type="UniProtKB" id="O74859"/>
    </source>
</evidence>
<evidence type="ECO:0000250" key="3">
    <source>
        <dbReference type="UniProtKB" id="Q7TQC5"/>
    </source>
</evidence>
<evidence type="ECO:0000250" key="4">
    <source>
        <dbReference type="UniProtKB" id="Q7Z2E3"/>
    </source>
</evidence>
<evidence type="ECO:0000255" key="5">
    <source>
        <dbReference type="PROSITE-ProRule" id="PRU00464"/>
    </source>
</evidence>
<evidence type="ECO:0000256" key="6">
    <source>
        <dbReference type="SAM" id="MobiDB-lite"/>
    </source>
</evidence>
<evidence type="ECO:0000303" key="7">
    <source ref="2"/>
</evidence>